<reference evidence="10" key="1">
    <citation type="journal article" date="2009" name="Nat. Biotechnol.">
        <title>Genome sequence of the recombinant protein production host Pichia pastoris.</title>
        <authorList>
            <person name="De Schutter K."/>
            <person name="Lin Y.-C."/>
            <person name="Tiels P."/>
            <person name="Van Hecke A."/>
            <person name="Glinka S."/>
            <person name="Weber-Lehmann J."/>
            <person name="Rouze P."/>
            <person name="Van de Peer Y."/>
            <person name="Callewaert N."/>
        </authorList>
    </citation>
    <scope>NUCLEOTIDE SEQUENCE [LARGE SCALE GENOMIC DNA]</scope>
    <source>
        <strain evidence="10">GS115 / ATCC 20864</strain>
    </source>
</reference>
<reference evidence="11 12" key="2">
    <citation type="journal article" date="2020" name="Elife">
        <title>Kin discrimination in social yeast is mediated by cell surface receptors of the Flo11 adhesin family.</title>
        <authorList>
            <person name="Brueckner S."/>
            <person name="Schubert R."/>
            <person name="Kraushaar T."/>
            <person name="Hartmann R."/>
            <person name="Hoffmann D."/>
            <person name="Jelli E."/>
            <person name="Drescher K."/>
            <person name="Mueller D.J."/>
            <person name="Oliver Essen L."/>
            <person name="Moesch H.U."/>
        </authorList>
    </citation>
    <scope>X-RAY CRYSTALLOGRAPHY (1.40 ANGSTROMS) OF 23-198</scope>
    <scope>FUNCTION</scope>
    <scope>DOMAIN</scope>
    <scope>DISULFIDE BONDS</scope>
</reference>
<dbReference type="EMBL" id="FN392320">
    <property type="protein sequence ID" value="CAY69661.1"/>
    <property type="molecule type" value="Genomic_DNA"/>
</dbReference>
<dbReference type="RefSeq" id="XP_002491941.1">
    <property type="nucleotide sequence ID" value="XM_002491896.1"/>
</dbReference>
<dbReference type="PDB" id="5FV5">
    <property type="method" value="X-ray"/>
    <property type="resolution" value="1.40 A"/>
    <property type="chains" value="A=23-198"/>
</dbReference>
<dbReference type="PDB" id="5FV6">
    <property type="method" value="X-ray"/>
    <property type="resolution" value="2.00 A"/>
    <property type="chains" value="A/B=23-198"/>
</dbReference>
<dbReference type="PDBsum" id="5FV5"/>
<dbReference type="PDBsum" id="5FV6"/>
<dbReference type="SMR" id="C4R2D7"/>
<dbReference type="STRING" id="644223.C4R2D7"/>
<dbReference type="GlyCosmos" id="C4R2D7">
    <property type="glycosylation" value="2 sites, No reported glycans"/>
</dbReference>
<dbReference type="EnsemblFungi" id="CAY69661">
    <property type="protein sequence ID" value="CAY69661"/>
    <property type="gene ID" value="PAS_chr2-2_0482"/>
</dbReference>
<dbReference type="GeneID" id="8198658"/>
<dbReference type="KEGG" id="ppa:PAS_chr2-2_0482"/>
<dbReference type="eggNOG" id="ENOG502S1H2">
    <property type="taxonomic scope" value="Eukaryota"/>
</dbReference>
<dbReference type="HOGENOM" id="CLU_338918_0_0_1"/>
<dbReference type="InParanoid" id="C4R2D7"/>
<dbReference type="OMA" id="SSADDCY"/>
<dbReference type="OrthoDB" id="4070545at2759"/>
<dbReference type="Proteomes" id="UP000000314">
    <property type="component" value="Chromosome 2"/>
</dbReference>
<dbReference type="GO" id="GO:0097656">
    <property type="term" value="P:cell-cell self recognition"/>
    <property type="evidence" value="ECO:0000314"/>
    <property type="project" value="UniProtKB"/>
</dbReference>
<dbReference type="GO" id="GO:0034109">
    <property type="term" value="P:homotypic cell-cell adhesion"/>
    <property type="evidence" value="ECO:0000314"/>
    <property type="project" value="UniProtKB"/>
</dbReference>
<dbReference type="InterPro" id="IPR018789">
    <property type="entry name" value="Flo11"/>
</dbReference>
<dbReference type="InterPro" id="IPR025928">
    <property type="entry name" value="Flocculin_t3_rpt"/>
</dbReference>
<dbReference type="PANTHER" id="PTHR10068">
    <property type="entry name" value="BONE MARROW PROTEOGLYCAN"/>
    <property type="match status" value="1"/>
</dbReference>
<dbReference type="PANTHER" id="PTHR10068:SF14">
    <property type="entry name" value="CELL WALL ADHESIN EAP1"/>
    <property type="match status" value="1"/>
</dbReference>
<dbReference type="Pfam" id="PF10182">
    <property type="entry name" value="Flo11"/>
    <property type="match status" value="2"/>
</dbReference>
<dbReference type="Pfam" id="PF13928">
    <property type="entry name" value="Flocculin_t3"/>
    <property type="match status" value="1"/>
</dbReference>
<dbReference type="SMART" id="SM01213">
    <property type="entry name" value="Flo11"/>
    <property type="match status" value="2"/>
</dbReference>
<dbReference type="PROSITE" id="PS51824">
    <property type="entry name" value="FLO11"/>
    <property type="match status" value="2"/>
</dbReference>
<organism evidence="10">
    <name type="scientific">Komagataella phaffii (strain GS115 / ATCC 20864)</name>
    <name type="common">Yeast</name>
    <name type="synonym">Pichia pastoris</name>
    <dbReference type="NCBI Taxonomy" id="644223"/>
    <lineage>
        <taxon>Eukaryota</taxon>
        <taxon>Fungi</taxon>
        <taxon>Dikarya</taxon>
        <taxon>Ascomycota</taxon>
        <taxon>Saccharomycotina</taxon>
        <taxon>Pichiomycetes</taxon>
        <taxon>Pichiales</taxon>
        <taxon>Pichiaceae</taxon>
        <taxon>Komagataella</taxon>
    </lineage>
</organism>
<protein>
    <recommendedName>
        <fullName evidence="1">Flocculation protein FLO11</fullName>
        <shortName evidence="1">Flo11p</shortName>
        <shortName evidence="1">Flocculin-11</shortName>
    </recommendedName>
    <alternativeName>
        <fullName evidence="7">KpFLO11</fullName>
    </alternativeName>
</protein>
<name>FLO11_KOMPG</name>
<accession>C4R2D7</accession>
<keyword id="KW-0002">3D-structure</keyword>
<keyword id="KW-0130">Cell adhesion</keyword>
<keyword id="KW-1015">Disulfide bond</keyword>
<keyword id="KW-0325">Glycoprotein</keyword>
<keyword id="KW-1185">Reference proteome</keyword>
<keyword id="KW-0732">Signal</keyword>
<sequence length="839" mass="91099">MVSLRSIFTSSILAAGLTRAHGSSGKTCPTSEVSPACYANQWETTFPPSDIKITGATWVQDNIYDVTLSYEAESLELENLTELKIIGLNSPTGGTKLVWSLNSKVYDIDNPAKWTTTLRVYTKSSADDCYVEMYPFQIQVDWCEAGASTDGCSAWKWPKSYDYDIGCDNMQDGVSRKHHPVYKWPKKCSSDCGVEPTTSDEPEEPTTSEEPVEPTSSDEEPTTSEEPTTSEEPEEPTTSDEPEEPTTSEEPEEPTTSEEPEEPTTSEEPTTSEEPEEPTSSDEEPTTSDEPEEPTTSDEPEEPTTSEEPTTSEEPEEPTTSSEEPTPSEEPEGPTCPTSEVSPACYADQWETTFPPSDIKITGATWVEDNIYDVTLSYEAESLELENLTELKIIGLNSPTGGTKVVWSLNSGIYDIDNPAKWTTTLRVYTKSSADDCYVEMYPFQIQVDWCEAGASTDGCSAWKWPKSYDYDIGCDNMQDGVSRKHHPVYKWPKKCSSNCGVEPTTSDEPEEPTTSEEPEEPTTSEEPEEPTSSDEEPTTSEEPEEPTTSDEPEEPTTSEEPEEPTTSEEPEEPTTSEEPEEPTTSDEEPGTTEEPLVPTTKTETDVSTTLLTVTDCGTKTCTKSLVITGVTKETVTTHGKTTVITTYCPLPTETVTPTPVTVTSTIYADESVTKTTVYTTGAVEKTVTVGGSSTVVVVHTPLTTAVVQSQSTDEIKTVVTARPSTTTIVRDVCYNSVCSVATIVTGVTEKTITFSTGSITVVPTYVPLVESEEHQRTASTSETRATSVVVPTVVGQSSSASATSSIFPSVTIHEGVANTVKNSMISGAVALLFNALFL</sequence>
<proteinExistence type="evidence at protein level"/>
<gene>
    <name evidence="7" type="primary">FLO11</name>
    <name evidence="9" type="ordered locus">PAS_chr2-2_0482</name>
</gene>
<evidence type="ECO:0000250" key="1">
    <source>
        <dbReference type="UniProtKB" id="P08640"/>
    </source>
</evidence>
<evidence type="ECO:0000255" key="2"/>
<evidence type="ECO:0000255" key="3">
    <source>
        <dbReference type="PROSITE-ProRule" id="PRU00498"/>
    </source>
</evidence>
<evidence type="ECO:0000255" key="4">
    <source>
        <dbReference type="PROSITE-ProRule" id="PRU01168"/>
    </source>
</evidence>
<evidence type="ECO:0000256" key="5">
    <source>
        <dbReference type="SAM" id="MobiDB-lite"/>
    </source>
</evidence>
<evidence type="ECO:0000269" key="6">
    <source>
    </source>
</evidence>
<evidence type="ECO:0000303" key="7">
    <source>
    </source>
</evidence>
<evidence type="ECO:0000305" key="8"/>
<evidence type="ECO:0000312" key="9">
    <source>
        <dbReference type="EMBL" id="CAY69661.1"/>
    </source>
</evidence>
<evidence type="ECO:0000312" key="10">
    <source>
        <dbReference type="Proteomes" id="UP000000314"/>
    </source>
</evidence>
<evidence type="ECO:0007744" key="11">
    <source>
        <dbReference type="PDB" id="5FV5"/>
    </source>
</evidence>
<evidence type="ECO:0007744" key="12">
    <source>
        <dbReference type="PDB" id="5FV6"/>
    </source>
</evidence>
<evidence type="ECO:0007829" key="13">
    <source>
        <dbReference type="PDB" id="5FV5"/>
    </source>
</evidence>
<evidence type="ECO:0007829" key="14">
    <source>
        <dbReference type="PDB" id="5FV6"/>
    </source>
</evidence>
<feature type="signal peptide" evidence="2">
    <location>
        <begin position="1"/>
        <end position="22"/>
    </location>
</feature>
<feature type="chain" id="PRO_5002941026" description="Flocculation protein FLO11" evidence="2">
    <location>
        <begin position="23"/>
        <end position="839"/>
    </location>
</feature>
<feature type="domain" description="Flo11 1" evidence="4">
    <location>
        <begin position="24"/>
        <end position="194"/>
    </location>
</feature>
<feature type="domain" description="Flo11 2" evidence="4">
    <location>
        <begin position="332"/>
        <end position="502"/>
    </location>
</feature>
<feature type="region of interest" description="Disordered" evidence="5">
    <location>
        <begin position="187"/>
        <end position="342"/>
    </location>
</feature>
<feature type="region of interest" description="Disordered" evidence="5">
    <location>
        <begin position="496"/>
        <end position="606"/>
    </location>
</feature>
<feature type="compositionally biased region" description="Acidic residues" evidence="5">
    <location>
        <begin position="198"/>
        <end position="317"/>
    </location>
</feature>
<feature type="compositionally biased region" description="Acidic residues" evidence="5">
    <location>
        <begin position="506"/>
        <end position="592"/>
    </location>
</feature>
<feature type="compositionally biased region" description="Low complexity" evidence="5">
    <location>
        <begin position="593"/>
        <end position="606"/>
    </location>
</feature>
<feature type="glycosylation site" description="N-linked (GlcNAc...) asparagine" evidence="3">
    <location>
        <position position="79"/>
    </location>
</feature>
<feature type="glycosylation site" description="N-linked (GlcNAc...) asparagine" evidence="3">
    <location>
        <position position="387"/>
    </location>
</feature>
<feature type="disulfide bond" evidence="6 11 12">
    <location>
        <begin position="28"/>
        <end position="188"/>
    </location>
</feature>
<feature type="disulfide bond" evidence="6 11 12">
    <location>
        <begin position="37"/>
        <end position="167"/>
    </location>
</feature>
<feature type="disulfide bond" evidence="6 11 12">
    <location>
        <begin position="129"/>
        <end position="192"/>
    </location>
</feature>
<feature type="disulfide bond" evidence="6 11 12">
    <location>
        <begin position="143"/>
        <end position="152"/>
    </location>
</feature>
<feature type="helix" evidence="13">
    <location>
        <begin position="24"/>
        <end position="26"/>
    </location>
</feature>
<feature type="helix" evidence="13">
    <location>
        <begin position="30"/>
        <end position="32"/>
    </location>
</feature>
<feature type="strand" evidence="13">
    <location>
        <begin position="34"/>
        <end position="36"/>
    </location>
</feature>
<feature type="strand" evidence="13">
    <location>
        <begin position="49"/>
        <end position="60"/>
    </location>
</feature>
<feature type="strand" evidence="13">
    <location>
        <begin position="63"/>
        <end position="72"/>
    </location>
</feature>
<feature type="helix" evidence="13">
    <location>
        <begin position="77"/>
        <end position="79"/>
    </location>
</feature>
<feature type="strand" evidence="13">
    <location>
        <begin position="80"/>
        <end position="87"/>
    </location>
</feature>
<feature type="strand" evidence="13">
    <location>
        <begin position="96"/>
        <end position="100"/>
    </location>
</feature>
<feature type="turn" evidence="13">
    <location>
        <begin position="101"/>
        <end position="104"/>
    </location>
</feature>
<feature type="strand" evidence="13">
    <location>
        <begin position="113"/>
        <end position="124"/>
    </location>
</feature>
<feature type="strand" evidence="13">
    <location>
        <begin position="130"/>
        <end position="133"/>
    </location>
</feature>
<feature type="strand" evidence="13">
    <location>
        <begin position="136"/>
        <end position="143"/>
    </location>
</feature>
<feature type="turn" evidence="13">
    <location>
        <begin position="150"/>
        <end position="154"/>
    </location>
</feature>
<feature type="strand" evidence="13">
    <location>
        <begin position="159"/>
        <end position="165"/>
    </location>
</feature>
<feature type="strand" evidence="14">
    <location>
        <begin position="169"/>
        <end position="171"/>
    </location>
</feature>
<feature type="strand" evidence="13">
    <location>
        <begin position="176"/>
        <end position="179"/>
    </location>
</feature>
<feature type="strand" evidence="13">
    <location>
        <begin position="182"/>
        <end position="185"/>
    </location>
</feature>
<feature type="helix" evidence="13">
    <location>
        <begin position="186"/>
        <end position="188"/>
    </location>
</feature>
<comment type="function">
    <text evidence="6">Homophilic binding protein that enables kin discrimination in heterogeneous yeast populations by mediating homotypic cell-cell interactions during flocculation, a reversible and asexual process in which cells adhere to form aggregates (flocs).</text>
</comment>
<comment type="domain">
    <text evidence="1 6">The Flo11 domain contains aromatic residues that form two hydrophobic bands on the surface of the protein that confer homophilic binding (PubMed:32286952). The hydrophobic bands are lined by stretches of acidic residues that may sensitise the protein to environmental pH (By similarity).</text>
</comment>
<comment type="similarity">
    <text evidence="8">Belongs to the flocculin family. Highly divergent.</text>
</comment>